<feature type="chain" id="PRO_0000237103" description="Small ribosomal subunit protein uS10">
    <location>
        <begin position="1"/>
        <end position="102"/>
    </location>
</feature>
<evidence type="ECO:0000255" key="1">
    <source>
        <dbReference type="HAMAP-Rule" id="MF_00508"/>
    </source>
</evidence>
<evidence type="ECO:0000305" key="2"/>
<protein>
    <recommendedName>
        <fullName evidence="1">Small ribosomal subunit protein uS10</fullName>
    </recommendedName>
    <alternativeName>
        <fullName evidence="2">30S ribosomal protein S10</fullName>
    </alternativeName>
</protein>
<organism>
    <name type="scientific">Streptococcus thermophilus (strain CNRZ 1066)</name>
    <dbReference type="NCBI Taxonomy" id="299768"/>
    <lineage>
        <taxon>Bacteria</taxon>
        <taxon>Bacillati</taxon>
        <taxon>Bacillota</taxon>
        <taxon>Bacilli</taxon>
        <taxon>Lactobacillales</taxon>
        <taxon>Streptococcaceae</taxon>
        <taxon>Streptococcus</taxon>
    </lineage>
</organism>
<sequence>MANKKIRIRLKAYEHRTLDTAAGKIVENATRTGATVAGPVPLSTERSLYTIIRATHKYKDSREQFEMRTHKRLIDIINPTQKTVDALMKLDLPSGVNVEIKL</sequence>
<proteinExistence type="inferred from homology"/>
<name>RS10_STRT1</name>
<reference key="1">
    <citation type="journal article" date="2004" name="Nat. Biotechnol.">
        <title>Complete sequence and comparative genome analysis of the dairy bacterium Streptococcus thermophilus.</title>
        <authorList>
            <person name="Bolotin A."/>
            <person name="Quinquis B."/>
            <person name="Renault P."/>
            <person name="Sorokin A."/>
            <person name="Ehrlich S.D."/>
            <person name="Kulakauskas S."/>
            <person name="Lapidus A."/>
            <person name="Goltsman E."/>
            <person name="Mazur M."/>
            <person name="Pusch G.D."/>
            <person name="Fonstein M."/>
            <person name="Overbeek R."/>
            <person name="Kyprides N."/>
            <person name="Purnelle B."/>
            <person name="Prozzi D."/>
            <person name="Ngui K."/>
            <person name="Masuy D."/>
            <person name="Hancy F."/>
            <person name="Burteau S."/>
            <person name="Boutry M."/>
            <person name="Delcour J."/>
            <person name="Goffeau A."/>
            <person name="Hols P."/>
        </authorList>
    </citation>
    <scope>NUCLEOTIDE SEQUENCE [LARGE SCALE GENOMIC DNA]</scope>
    <source>
        <strain>CNRZ 1066</strain>
    </source>
</reference>
<comment type="function">
    <text evidence="1">Involved in the binding of tRNA to the ribosomes.</text>
</comment>
<comment type="subunit">
    <text evidence="1">Part of the 30S ribosomal subunit.</text>
</comment>
<comment type="similarity">
    <text evidence="1">Belongs to the universal ribosomal protein uS10 family.</text>
</comment>
<dbReference type="EMBL" id="CP000024">
    <property type="protein sequence ID" value="AAV63448.1"/>
    <property type="molecule type" value="Genomic_DNA"/>
</dbReference>
<dbReference type="RefSeq" id="WP_011227607.1">
    <property type="nucleotide sequence ID" value="NC_006449.1"/>
</dbReference>
<dbReference type="SMR" id="Q5LXR0"/>
<dbReference type="KEGG" id="stc:str1935"/>
<dbReference type="HOGENOM" id="CLU_122625_1_3_9"/>
<dbReference type="GO" id="GO:1990904">
    <property type="term" value="C:ribonucleoprotein complex"/>
    <property type="evidence" value="ECO:0007669"/>
    <property type="project" value="UniProtKB-KW"/>
</dbReference>
<dbReference type="GO" id="GO:0005840">
    <property type="term" value="C:ribosome"/>
    <property type="evidence" value="ECO:0007669"/>
    <property type="project" value="UniProtKB-KW"/>
</dbReference>
<dbReference type="GO" id="GO:0003735">
    <property type="term" value="F:structural constituent of ribosome"/>
    <property type="evidence" value="ECO:0007669"/>
    <property type="project" value="InterPro"/>
</dbReference>
<dbReference type="GO" id="GO:0000049">
    <property type="term" value="F:tRNA binding"/>
    <property type="evidence" value="ECO:0007669"/>
    <property type="project" value="UniProtKB-UniRule"/>
</dbReference>
<dbReference type="GO" id="GO:0006412">
    <property type="term" value="P:translation"/>
    <property type="evidence" value="ECO:0007669"/>
    <property type="project" value="UniProtKB-UniRule"/>
</dbReference>
<dbReference type="FunFam" id="3.30.70.600:FF:000001">
    <property type="entry name" value="30S ribosomal protein S10"/>
    <property type="match status" value="1"/>
</dbReference>
<dbReference type="Gene3D" id="3.30.70.600">
    <property type="entry name" value="Ribosomal protein S10 domain"/>
    <property type="match status" value="1"/>
</dbReference>
<dbReference type="HAMAP" id="MF_00508">
    <property type="entry name" value="Ribosomal_uS10"/>
    <property type="match status" value="1"/>
</dbReference>
<dbReference type="InterPro" id="IPR001848">
    <property type="entry name" value="Ribosomal_uS10"/>
</dbReference>
<dbReference type="InterPro" id="IPR027486">
    <property type="entry name" value="Ribosomal_uS10_dom"/>
</dbReference>
<dbReference type="InterPro" id="IPR036838">
    <property type="entry name" value="Ribosomal_uS10_dom_sf"/>
</dbReference>
<dbReference type="NCBIfam" id="NF001861">
    <property type="entry name" value="PRK00596.1"/>
    <property type="match status" value="1"/>
</dbReference>
<dbReference type="NCBIfam" id="TIGR01049">
    <property type="entry name" value="rpsJ_bact"/>
    <property type="match status" value="1"/>
</dbReference>
<dbReference type="PANTHER" id="PTHR11700">
    <property type="entry name" value="30S RIBOSOMAL PROTEIN S10 FAMILY MEMBER"/>
    <property type="match status" value="1"/>
</dbReference>
<dbReference type="Pfam" id="PF00338">
    <property type="entry name" value="Ribosomal_S10"/>
    <property type="match status" value="1"/>
</dbReference>
<dbReference type="PRINTS" id="PR00971">
    <property type="entry name" value="RIBOSOMALS10"/>
</dbReference>
<dbReference type="SMART" id="SM01403">
    <property type="entry name" value="Ribosomal_S10"/>
    <property type="match status" value="1"/>
</dbReference>
<dbReference type="SUPFAM" id="SSF54999">
    <property type="entry name" value="Ribosomal protein S10"/>
    <property type="match status" value="1"/>
</dbReference>
<keyword id="KW-0687">Ribonucleoprotein</keyword>
<keyword id="KW-0689">Ribosomal protein</keyword>
<gene>
    <name evidence="1" type="primary">rpsJ</name>
    <name type="ordered locus">str1935</name>
</gene>
<accession>Q5LXR0</accession>